<sequence>AKATILLMPKFDINSLLALIHKHKVTIAPVVPPIVLAISKSPDLHKYDLSSIRVLKSGGAPLGKELEDTLRAKFPNAKLGQGYGMTEAGPVLTMSLAFAKEPIDVKPGACGTVVRNAEMKIVDPETGHSLPRNQSGEICIRGDQIMKGYLNDGEATERTIDKDGWLHTGDIGYIDDDDELFIVDRLKELIKYKGFQVAPAELEALLLTHPKISDAAVVPMKDEAAGEVPVAFVVISNGYTDTTEDEIKQFISKQVVFYKRINRVFFIDAIPKSPSGKILRKDLRAKIAASVPK</sequence>
<keyword id="KW-0067">ATP-binding</keyword>
<keyword id="KW-0436">Ligase</keyword>
<keyword id="KW-0547">Nucleotide-binding</keyword>
<keyword id="KW-0587">Phenylpropanoid metabolism</keyword>
<keyword id="KW-1185">Reference proteome</keyword>
<protein>
    <recommendedName>
        <fullName>4-coumarate--CoA ligase 1</fullName>
        <shortName>4CL 1</shortName>
        <ecNumber evidence="1">6.2.1.12</ecNumber>
    </recommendedName>
    <alternativeName>
        <fullName>4-coumaroyl-CoA synthase 1</fullName>
    </alternativeName>
    <alternativeName>
        <fullName>Clone 4CL14</fullName>
    </alternativeName>
</protein>
<evidence type="ECO:0000250" key="1">
    <source>
        <dbReference type="UniProtKB" id="O24146"/>
    </source>
</evidence>
<evidence type="ECO:0000250" key="2">
    <source>
        <dbReference type="UniProtKB" id="Q42524"/>
    </source>
</evidence>
<evidence type="ECO:0000305" key="3"/>
<dbReference type="EC" id="6.2.1.12" evidence="1"/>
<dbReference type="EMBL" id="X69954">
    <property type="protein sequence ID" value="CAA49575.1"/>
    <property type="molecule type" value="mRNA"/>
</dbReference>
<dbReference type="PIR" id="S31705">
    <property type="entry name" value="S31705"/>
</dbReference>
<dbReference type="SMR" id="P31686"/>
<dbReference type="STRING" id="3847.P31686"/>
<dbReference type="PaxDb" id="3847-GLYMA13G44950.1"/>
<dbReference type="eggNOG" id="KOG1176">
    <property type="taxonomic scope" value="Eukaryota"/>
</dbReference>
<dbReference type="InParanoid" id="P31686"/>
<dbReference type="UniPathway" id="UPA00372">
    <property type="reaction ID" value="UER00547"/>
</dbReference>
<dbReference type="Proteomes" id="UP000008827">
    <property type="component" value="Unplaced"/>
</dbReference>
<dbReference type="GO" id="GO:0016207">
    <property type="term" value="F:4-coumarate-CoA ligase activity"/>
    <property type="evidence" value="ECO:0007669"/>
    <property type="project" value="UniProtKB-EC"/>
</dbReference>
<dbReference type="GO" id="GO:0005524">
    <property type="term" value="F:ATP binding"/>
    <property type="evidence" value="ECO:0007669"/>
    <property type="project" value="UniProtKB-KW"/>
</dbReference>
<dbReference type="GO" id="GO:0016405">
    <property type="term" value="F:CoA-ligase activity"/>
    <property type="evidence" value="ECO:0000318"/>
    <property type="project" value="GO_Central"/>
</dbReference>
<dbReference type="GO" id="GO:0009698">
    <property type="term" value="P:phenylpropanoid metabolic process"/>
    <property type="evidence" value="ECO:0007669"/>
    <property type="project" value="UniProtKB-KW"/>
</dbReference>
<dbReference type="FunFam" id="3.30.300.30:FF:000007">
    <property type="entry name" value="4-coumarate--CoA ligase 2"/>
    <property type="match status" value="1"/>
</dbReference>
<dbReference type="Gene3D" id="3.30.300.30">
    <property type="match status" value="1"/>
</dbReference>
<dbReference type="Gene3D" id="3.40.50.12780">
    <property type="entry name" value="N-terminal domain of ligase-like"/>
    <property type="match status" value="1"/>
</dbReference>
<dbReference type="InterPro" id="IPR025110">
    <property type="entry name" value="AMP-bd_C"/>
</dbReference>
<dbReference type="InterPro" id="IPR045851">
    <property type="entry name" value="AMP-bd_C_sf"/>
</dbReference>
<dbReference type="InterPro" id="IPR000873">
    <property type="entry name" value="AMP-dep_synth/lig_dom"/>
</dbReference>
<dbReference type="InterPro" id="IPR042099">
    <property type="entry name" value="ANL_N_sf"/>
</dbReference>
<dbReference type="PANTHER" id="PTHR24096:SF406">
    <property type="entry name" value="4-COUMARATE--COA LIGASE 2"/>
    <property type="match status" value="1"/>
</dbReference>
<dbReference type="PANTHER" id="PTHR24096">
    <property type="entry name" value="LONG-CHAIN-FATTY-ACID--COA LIGASE"/>
    <property type="match status" value="1"/>
</dbReference>
<dbReference type="Pfam" id="PF00501">
    <property type="entry name" value="AMP-binding"/>
    <property type="match status" value="1"/>
</dbReference>
<dbReference type="Pfam" id="PF13193">
    <property type="entry name" value="AMP-binding_C"/>
    <property type="match status" value="1"/>
</dbReference>
<dbReference type="SUPFAM" id="SSF56801">
    <property type="entry name" value="Acetyl-CoA synthetase-like"/>
    <property type="match status" value="1"/>
</dbReference>
<proteinExistence type="evidence at transcript level"/>
<name>4CL1_SOYBN</name>
<comment type="function">
    <text evidence="1">Carboxylate--CoA ligase that may use 4-coumarate as substrate. Follows a two-step reaction mechanism, wherein the carboxylate substrate first undergoes adenylation by ATP, followed by a thioesterification in the presence of CoA to yield the final CoA thioester.</text>
</comment>
<comment type="catalytic activity">
    <reaction evidence="1">
        <text>(E)-4-coumarate + ATP + CoA = (E)-4-coumaroyl-CoA + AMP + diphosphate</text>
        <dbReference type="Rhea" id="RHEA:19641"/>
        <dbReference type="ChEBI" id="CHEBI:12876"/>
        <dbReference type="ChEBI" id="CHEBI:30616"/>
        <dbReference type="ChEBI" id="CHEBI:33019"/>
        <dbReference type="ChEBI" id="CHEBI:57287"/>
        <dbReference type="ChEBI" id="CHEBI:85008"/>
        <dbReference type="ChEBI" id="CHEBI:456215"/>
        <dbReference type="EC" id="6.2.1.12"/>
    </reaction>
    <physiologicalReaction direction="left-to-right" evidence="1">
        <dbReference type="Rhea" id="RHEA:19642"/>
    </physiologicalReaction>
</comment>
<comment type="catalytic activity">
    <reaction evidence="1">
        <text>(E)-4-coumarate + ATP + H(+) = (E)-4-coumaroyl-AMP + diphosphate</text>
        <dbReference type="Rhea" id="RHEA:72419"/>
        <dbReference type="ChEBI" id="CHEBI:12876"/>
        <dbReference type="ChEBI" id="CHEBI:15378"/>
        <dbReference type="ChEBI" id="CHEBI:30616"/>
        <dbReference type="ChEBI" id="CHEBI:33019"/>
        <dbReference type="ChEBI" id="CHEBI:192348"/>
    </reaction>
    <physiologicalReaction direction="left-to-right" evidence="1">
        <dbReference type="Rhea" id="RHEA:72420"/>
    </physiologicalReaction>
</comment>
<comment type="catalytic activity">
    <reaction evidence="1">
        <text>(E)-4-coumaroyl-AMP + CoA = (E)-4-coumaroyl-CoA + AMP + H(+)</text>
        <dbReference type="Rhea" id="RHEA:72423"/>
        <dbReference type="ChEBI" id="CHEBI:15378"/>
        <dbReference type="ChEBI" id="CHEBI:57287"/>
        <dbReference type="ChEBI" id="CHEBI:85008"/>
        <dbReference type="ChEBI" id="CHEBI:192348"/>
        <dbReference type="ChEBI" id="CHEBI:456215"/>
    </reaction>
    <physiologicalReaction direction="left-to-right" evidence="1">
        <dbReference type="Rhea" id="RHEA:72424"/>
    </physiologicalReaction>
</comment>
<comment type="cofactor">
    <cofactor evidence="1">
        <name>Mg(2+)</name>
        <dbReference type="ChEBI" id="CHEBI:18420"/>
    </cofactor>
</comment>
<comment type="pathway">
    <text evidence="2">Phytoalexin biosynthesis; 3,4',5-trihydroxystilbene biosynthesis; 3,4',5-trihydroxystilbene from trans-4-coumarate: step 1/2.</text>
</comment>
<comment type="domain">
    <text evidence="2">Both substrate-binding domains (SBD1 and SBD2) are involved in the substrate recognition, and are sufficient to confer the substrate specificity.</text>
</comment>
<comment type="similarity">
    <text evidence="3">Belongs to the ATP-dependent AMP-binding enzyme family.</text>
</comment>
<accession>P31686</accession>
<feature type="chain" id="PRO_0000193038" description="4-coumarate--CoA ligase 1">
    <location>
        <begin position="1" status="less than"/>
        <end position="293"/>
    </location>
</feature>
<feature type="region of interest" description="SBD1" evidence="2">
    <location>
        <begin position="12"/>
        <end position="81"/>
    </location>
</feature>
<feature type="region of interest" description="SBD2" evidence="2">
    <location>
        <begin position="82"/>
        <end position="149"/>
    </location>
</feature>
<feature type="binding site" evidence="1">
    <location>
        <position position="10"/>
    </location>
    <ligand>
        <name>CoA</name>
        <dbReference type="ChEBI" id="CHEBI:57287"/>
    </ligand>
</feature>
<feature type="binding site" evidence="1">
    <location>
        <position position="59"/>
    </location>
    <ligand>
        <name>(E)-4-coumaroyl-AMP</name>
        <dbReference type="ChEBI" id="CHEBI:192348"/>
    </ligand>
</feature>
<feature type="binding site" evidence="1">
    <location>
        <position position="81"/>
    </location>
    <ligand>
        <name>(E)-4-coumaroyl-AMP</name>
        <dbReference type="ChEBI" id="CHEBI:192348"/>
    </ligand>
</feature>
<feature type="binding site" evidence="1">
    <location>
        <position position="81"/>
    </location>
    <ligand>
        <name>ATP</name>
        <dbReference type="ChEBI" id="CHEBI:30616"/>
    </ligand>
</feature>
<feature type="binding site" evidence="1">
    <location>
        <position position="82"/>
    </location>
    <ligand>
        <name>(E)-4-coumaroyl-AMP</name>
        <dbReference type="ChEBI" id="CHEBI:192348"/>
    </ligand>
</feature>
<feature type="binding site" evidence="1">
    <location>
        <position position="82"/>
    </location>
    <ligand>
        <name>ATP</name>
        <dbReference type="ChEBI" id="CHEBI:30616"/>
    </ligand>
</feature>
<feature type="binding site" evidence="1">
    <location>
        <position position="86"/>
    </location>
    <ligand>
        <name>(E)-4-coumaroyl-AMP</name>
        <dbReference type="ChEBI" id="CHEBI:192348"/>
    </ligand>
</feature>
<feature type="binding site" evidence="1">
    <location>
        <position position="86"/>
    </location>
    <ligand>
        <name>ATP</name>
        <dbReference type="ChEBI" id="CHEBI:30616"/>
    </ligand>
</feature>
<feature type="binding site" evidence="1">
    <location>
        <position position="94"/>
    </location>
    <ligand>
        <name>(E)-4-coumaroyl-AMP</name>
        <dbReference type="ChEBI" id="CHEBI:192348"/>
    </ligand>
</feature>
<feature type="binding site" evidence="1">
    <location>
        <position position="170"/>
    </location>
    <ligand>
        <name>ATP</name>
        <dbReference type="ChEBI" id="CHEBI:30616"/>
    </ligand>
</feature>
<feature type="binding site" evidence="1">
    <location>
        <position position="185"/>
    </location>
    <ligand>
        <name>ATP</name>
        <dbReference type="ChEBI" id="CHEBI:30616"/>
    </ligand>
</feature>
<feature type="binding site" evidence="1">
    <location>
        <position position="187"/>
    </location>
    <ligand>
        <name>(E)-4-coumaroyl-AMP</name>
        <dbReference type="ChEBI" id="CHEBI:192348"/>
    </ligand>
</feature>
<feature type="binding site" evidence="1">
    <location>
        <position position="191"/>
    </location>
    <ligand>
        <name>(E)-4-coumaroyl-AMP</name>
        <dbReference type="ChEBI" id="CHEBI:192348"/>
    </ligand>
</feature>
<feature type="binding site" evidence="1">
    <location>
        <position position="193"/>
    </location>
    <ligand>
        <name>CoA</name>
        <dbReference type="ChEBI" id="CHEBI:57287"/>
    </ligand>
</feature>
<feature type="binding site" evidence="1">
    <location>
        <position position="194"/>
    </location>
    <ligand>
        <name>CoA</name>
        <dbReference type="ChEBI" id="CHEBI:57287"/>
    </ligand>
</feature>
<feature type="binding site" evidence="1">
    <location>
        <position position="277"/>
    </location>
    <ligand>
        <name>ATP</name>
        <dbReference type="ChEBI" id="CHEBI:30616"/>
    </ligand>
</feature>
<feature type="non-terminal residue">
    <location>
        <position position="1"/>
    </location>
</feature>
<organism>
    <name type="scientific">Glycine max</name>
    <name type="common">Soybean</name>
    <name type="synonym">Glycine hispida</name>
    <dbReference type="NCBI Taxonomy" id="3847"/>
    <lineage>
        <taxon>Eukaryota</taxon>
        <taxon>Viridiplantae</taxon>
        <taxon>Streptophyta</taxon>
        <taxon>Embryophyta</taxon>
        <taxon>Tracheophyta</taxon>
        <taxon>Spermatophyta</taxon>
        <taxon>Magnoliopsida</taxon>
        <taxon>eudicotyledons</taxon>
        <taxon>Gunneridae</taxon>
        <taxon>Pentapetalae</taxon>
        <taxon>rosids</taxon>
        <taxon>fabids</taxon>
        <taxon>Fabales</taxon>
        <taxon>Fabaceae</taxon>
        <taxon>Papilionoideae</taxon>
        <taxon>50 kb inversion clade</taxon>
        <taxon>NPAAA clade</taxon>
        <taxon>indigoferoid/millettioid clade</taxon>
        <taxon>Phaseoleae</taxon>
        <taxon>Glycine</taxon>
        <taxon>Glycine subgen. Soja</taxon>
    </lineage>
</organism>
<reference key="1">
    <citation type="journal article" date="1993" name="Plant Physiol.">
        <title>Molecular cloning and expression of 4-coumarate:coenzyme A ligase, an enzyme involved in the resistance response of soybean (Glycine max L.) against pathogen attack.</title>
        <authorList>
            <person name="Uhlmann A."/>
            <person name="Ebel J."/>
        </authorList>
    </citation>
    <scope>NUCLEOTIDE SEQUENCE [MRNA]</scope>
    <source>
        <strain>cv. Harosoy 63</strain>
    </source>
</reference>